<protein>
    <recommendedName>
        <fullName evidence="1">Ubiquinone biosynthesis O-methyltransferase</fullName>
    </recommendedName>
    <alternativeName>
        <fullName evidence="1">2-polyprenyl-6-hydroxyphenol methylase</fullName>
        <ecNumber evidence="1">2.1.1.222</ecNumber>
    </alternativeName>
    <alternativeName>
        <fullName evidence="1">3-demethylubiquinone 3-O-methyltransferase</fullName>
        <ecNumber evidence="1">2.1.1.64</ecNumber>
    </alternativeName>
</protein>
<sequence length="246" mass="27121">MSSAYDRVSKNYRQSELDKFAAFTSGWWDPHGPQKPLHALNPVRLDYISKRVPLSGARVLDVGCGGGLLSEALARQGAHVTAIDLAPELIKVARLHGLESGIQVDYRIQAIEDLLAEQPAPFDAIACMEMLEHVPDPAAIVDACAHLLKPGGRLFVSTINRTLAAFMLAVVGAEYVVRLLPKGTHQYKDFIRPAELAAWLRHAGLHLEDVSGMRYEPWRNRARLTDRTDINYLACAISPEAPHATE</sequence>
<evidence type="ECO:0000255" key="1">
    <source>
        <dbReference type="HAMAP-Rule" id="MF_00472"/>
    </source>
</evidence>
<comment type="function">
    <text evidence="1">O-methyltransferase that catalyzes the 2 O-methylation steps in the ubiquinone biosynthetic pathway.</text>
</comment>
<comment type="catalytic activity">
    <reaction evidence="1">
        <text>a 3-demethylubiquinol + S-adenosyl-L-methionine = a ubiquinol + S-adenosyl-L-homocysteine + H(+)</text>
        <dbReference type="Rhea" id="RHEA:44380"/>
        <dbReference type="Rhea" id="RHEA-COMP:9566"/>
        <dbReference type="Rhea" id="RHEA-COMP:10914"/>
        <dbReference type="ChEBI" id="CHEBI:15378"/>
        <dbReference type="ChEBI" id="CHEBI:17976"/>
        <dbReference type="ChEBI" id="CHEBI:57856"/>
        <dbReference type="ChEBI" id="CHEBI:59789"/>
        <dbReference type="ChEBI" id="CHEBI:84422"/>
        <dbReference type="EC" id="2.1.1.64"/>
    </reaction>
</comment>
<comment type="catalytic activity">
    <reaction evidence="1">
        <text>a 3-(all-trans-polyprenyl)benzene-1,2-diol + S-adenosyl-L-methionine = a 2-methoxy-6-(all-trans-polyprenyl)phenol + S-adenosyl-L-homocysteine + H(+)</text>
        <dbReference type="Rhea" id="RHEA:31411"/>
        <dbReference type="Rhea" id="RHEA-COMP:9550"/>
        <dbReference type="Rhea" id="RHEA-COMP:9551"/>
        <dbReference type="ChEBI" id="CHEBI:15378"/>
        <dbReference type="ChEBI" id="CHEBI:57856"/>
        <dbReference type="ChEBI" id="CHEBI:59789"/>
        <dbReference type="ChEBI" id="CHEBI:62729"/>
        <dbReference type="ChEBI" id="CHEBI:62731"/>
        <dbReference type="EC" id="2.1.1.222"/>
    </reaction>
</comment>
<comment type="pathway">
    <text evidence="1">Cofactor biosynthesis; ubiquinone biosynthesis.</text>
</comment>
<comment type="similarity">
    <text evidence="1">Belongs to the methyltransferase superfamily. UbiG/COQ3 family.</text>
</comment>
<organism>
    <name type="scientific">Xylella fastidiosa (strain 9a5c)</name>
    <dbReference type="NCBI Taxonomy" id="160492"/>
    <lineage>
        <taxon>Bacteria</taxon>
        <taxon>Pseudomonadati</taxon>
        <taxon>Pseudomonadota</taxon>
        <taxon>Gammaproteobacteria</taxon>
        <taxon>Lysobacterales</taxon>
        <taxon>Lysobacteraceae</taxon>
        <taxon>Xylella</taxon>
    </lineage>
</organism>
<dbReference type="EC" id="2.1.1.222" evidence="1"/>
<dbReference type="EC" id="2.1.1.64" evidence="1"/>
<dbReference type="EMBL" id="AE003849">
    <property type="protein sequence ID" value="AAF85269.1"/>
    <property type="molecule type" value="Genomic_DNA"/>
</dbReference>
<dbReference type="PIR" id="H82553">
    <property type="entry name" value="H82553"/>
</dbReference>
<dbReference type="RefSeq" id="WP_010894914.1">
    <property type="nucleotide sequence ID" value="NC_002488.3"/>
</dbReference>
<dbReference type="SMR" id="Q9PAM5"/>
<dbReference type="STRING" id="160492.XF_2471"/>
<dbReference type="KEGG" id="xfa:XF_2471"/>
<dbReference type="eggNOG" id="COG2227">
    <property type="taxonomic scope" value="Bacteria"/>
</dbReference>
<dbReference type="HOGENOM" id="CLU_042432_5_0_6"/>
<dbReference type="UniPathway" id="UPA00232"/>
<dbReference type="Proteomes" id="UP000000812">
    <property type="component" value="Chromosome"/>
</dbReference>
<dbReference type="GO" id="GO:0102208">
    <property type="term" value="F:2-polyprenyl-6-hydroxyphenol methylase activity"/>
    <property type="evidence" value="ECO:0007669"/>
    <property type="project" value="UniProtKB-EC"/>
</dbReference>
<dbReference type="GO" id="GO:0061542">
    <property type="term" value="F:3-demethylubiquinol 3-O-methyltransferase activity"/>
    <property type="evidence" value="ECO:0007669"/>
    <property type="project" value="UniProtKB-UniRule"/>
</dbReference>
<dbReference type="GO" id="GO:0010420">
    <property type="term" value="F:polyprenyldihydroxybenzoate methyltransferase activity"/>
    <property type="evidence" value="ECO:0007669"/>
    <property type="project" value="InterPro"/>
</dbReference>
<dbReference type="GO" id="GO:0032259">
    <property type="term" value="P:methylation"/>
    <property type="evidence" value="ECO:0007669"/>
    <property type="project" value="UniProtKB-KW"/>
</dbReference>
<dbReference type="CDD" id="cd02440">
    <property type="entry name" value="AdoMet_MTases"/>
    <property type="match status" value="1"/>
</dbReference>
<dbReference type="Gene3D" id="3.40.50.150">
    <property type="entry name" value="Vaccinia Virus protein VP39"/>
    <property type="match status" value="1"/>
</dbReference>
<dbReference type="HAMAP" id="MF_00472">
    <property type="entry name" value="UbiG"/>
    <property type="match status" value="1"/>
</dbReference>
<dbReference type="InterPro" id="IPR029063">
    <property type="entry name" value="SAM-dependent_MTases_sf"/>
</dbReference>
<dbReference type="InterPro" id="IPR010233">
    <property type="entry name" value="UbiG_MeTrfase"/>
</dbReference>
<dbReference type="NCBIfam" id="TIGR01983">
    <property type="entry name" value="UbiG"/>
    <property type="match status" value="1"/>
</dbReference>
<dbReference type="PANTHER" id="PTHR43464">
    <property type="entry name" value="METHYLTRANSFERASE"/>
    <property type="match status" value="1"/>
</dbReference>
<dbReference type="PANTHER" id="PTHR43464:SF19">
    <property type="entry name" value="UBIQUINONE BIOSYNTHESIS O-METHYLTRANSFERASE, MITOCHONDRIAL"/>
    <property type="match status" value="1"/>
</dbReference>
<dbReference type="Pfam" id="PF13489">
    <property type="entry name" value="Methyltransf_23"/>
    <property type="match status" value="1"/>
</dbReference>
<dbReference type="SUPFAM" id="SSF53335">
    <property type="entry name" value="S-adenosyl-L-methionine-dependent methyltransferases"/>
    <property type="match status" value="1"/>
</dbReference>
<name>UBIG_XYLFA</name>
<reference key="1">
    <citation type="journal article" date="2000" name="Nature">
        <title>The genome sequence of the plant pathogen Xylella fastidiosa.</title>
        <authorList>
            <person name="Simpson A.J.G."/>
            <person name="Reinach F.C."/>
            <person name="Arruda P."/>
            <person name="Abreu F.A."/>
            <person name="Acencio M."/>
            <person name="Alvarenga R."/>
            <person name="Alves L.M.C."/>
            <person name="Araya J.E."/>
            <person name="Baia G.S."/>
            <person name="Baptista C.S."/>
            <person name="Barros M.H."/>
            <person name="Bonaccorsi E.D."/>
            <person name="Bordin S."/>
            <person name="Bove J.M."/>
            <person name="Briones M.R.S."/>
            <person name="Bueno M.R.P."/>
            <person name="Camargo A.A."/>
            <person name="Camargo L.E.A."/>
            <person name="Carraro D.M."/>
            <person name="Carrer H."/>
            <person name="Colauto N.B."/>
            <person name="Colombo C."/>
            <person name="Costa F.F."/>
            <person name="Costa M.C.R."/>
            <person name="Costa-Neto C.M."/>
            <person name="Coutinho L.L."/>
            <person name="Cristofani M."/>
            <person name="Dias-Neto E."/>
            <person name="Docena C."/>
            <person name="El-Dorry H."/>
            <person name="Facincani A.P."/>
            <person name="Ferreira A.J.S."/>
            <person name="Ferreira V.C.A."/>
            <person name="Ferro J.A."/>
            <person name="Fraga J.S."/>
            <person name="Franca S.C."/>
            <person name="Franco M.C."/>
            <person name="Frohme M."/>
            <person name="Furlan L.R."/>
            <person name="Garnier M."/>
            <person name="Goldman G.H."/>
            <person name="Goldman M.H.S."/>
            <person name="Gomes S.L."/>
            <person name="Gruber A."/>
            <person name="Ho P.L."/>
            <person name="Hoheisel J.D."/>
            <person name="Junqueira M.L."/>
            <person name="Kemper E.L."/>
            <person name="Kitajima J.P."/>
            <person name="Krieger J.E."/>
            <person name="Kuramae E.E."/>
            <person name="Laigret F."/>
            <person name="Lambais M.R."/>
            <person name="Leite L.C.C."/>
            <person name="Lemos E.G.M."/>
            <person name="Lemos M.V.F."/>
            <person name="Lopes S.A."/>
            <person name="Lopes C.R."/>
            <person name="Machado J.A."/>
            <person name="Machado M.A."/>
            <person name="Madeira A.M.B.N."/>
            <person name="Madeira H.M.F."/>
            <person name="Marino C.L."/>
            <person name="Marques M.V."/>
            <person name="Martins E.A.L."/>
            <person name="Martins E.M.F."/>
            <person name="Matsukuma A.Y."/>
            <person name="Menck C.F.M."/>
            <person name="Miracca E.C."/>
            <person name="Miyaki C.Y."/>
            <person name="Monteiro-Vitorello C.B."/>
            <person name="Moon D.H."/>
            <person name="Nagai M.A."/>
            <person name="Nascimento A.L.T.O."/>
            <person name="Netto L.E.S."/>
            <person name="Nhani A. Jr."/>
            <person name="Nobrega F.G."/>
            <person name="Nunes L.R."/>
            <person name="Oliveira M.A."/>
            <person name="de Oliveira M.C."/>
            <person name="de Oliveira R.C."/>
            <person name="Palmieri D.A."/>
            <person name="Paris A."/>
            <person name="Peixoto B.R."/>
            <person name="Pereira G.A.G."/>
            <person name="Pereira H.A. Jr."/>
            <person name="Pesquero J.B."/>
            <person name="Quaggio R.B."/>
            <person name="Roberto P.G."/>
            <person name="Rodrigues V."/>
            <person name="de Rosa A.J.M."/>
            <person name="de Rosa V.E. Jr."/>
            <person name="de Sa R.G."/>
            <person name="Santelli R.V."/>
            <person name="Sawasaki H.E."/>
            <person name="da Silva A.C.R."/>
            <person name="da Silva A.M."/>
            <person name="da Silva F.R."/>
            <person name="Silva W.A. Jr."/>
            <person name="da Silveira J.F."/>
            <person name="Silvestri M.L.Z."/>
            <person name="Siqueira W.J."/>
            <person name="de Souza A.A."/>
            <person name="de Souza A.P."/>
            <person name="Terenzi M.F."/>
            <person name="Truffi D."/>
            <person name="Tsai S.M."/>
            <person name="Tsuhako M.H."/>
            <person name="Vallada H."/>
            <person name="Van Sluys M.A."/>
            <person name="Verjovski-Almeida S."/>
            <person name="Vettore A.L."/>
            <person name="Zago M.A."/>
            <person name="Zatz M."/>
            <person name="Meidanis J."/>
            <person name="Setubal J.C."/>
        </authorList>
    </citation>
    <scope>NUCLEOTIDE SEQUENCE [LARGE SCALE GENOMIC DNA]</scope>
    <source>
        <strain>9a5c</strain>
    </source>
</reference>
<feature type="chain" id="PRO_0000193411" description="Ubiquinone biosynthesis O-methyltransferase">
    <location>
        <begin position="1"/>
        <end position="246"/>
    </location>
</feature>
<feature type="binding site" evidence="1">
    <location>
        <position position="44"/>
    </location>
    <ligand>
        <name>S-adenosyl-L-methionine</name>
        <dbReference type="ChEBI" id="CHEBI:59789"/>
    </ligand>
</feature>
<feature type="binding site" evidence="1">
    <location>
        <position position="63"/>
    </location>
    <ligand>
        <name>S-adenosyl-L-methionine</name>
        <dbReference type="ChEBI" id="CHEBI:59789"/>
    </ligand>
</feature>
<feature type="binding site" evidence="1">
    <location>
        <position position="84"/>
    </location>
    <ligand>
        <name>S-adenosyl-L-methionine</name>
        <dbReference type="ChEBI" id="CHEBI:59789"/>
    </ligand>
</feature>
<feature type="binding site" evidence="1">
    <location>
        <position position="128"/>
    </location>
    <ligand>
        <name>S-adenosyl-L-methionine</name>
        <dbReference type="ChEBI" id="CHEBI:59789"/>
    </ligand>
</feature>
<keyword id="KW-0489">Methyltransferase</keyword>
<keyword id="KW-0949">S-adenosyl-L-methionine</keyword>
<keyword id="KW-0808">Transferase</keyword>
<keyword id="KW-0831">Ubiquinone biosynthesis</keyword>
<proteinExistence type="inferred from homology"/>
<gene>
    <name evidence="1" type="primary">ubiG</name>
    <name type="ordered locus">XF_2471</name>
</gene>
<accession>Q9PAM5</accession>